<reference key="1">
    <citation type="journal article" date="2008" name="J. Bacteriol.">
        <title>The genome sequence of the tomato-pathogenic actinomycete Clavibacter michiganensis subsp. michiganensis NCPPB382 reveals a large island involved in pathogenicity.</title>
        <authorList>
            <person name="Gartemann K.-H."/>
            <person name="Abt B."/>
            <person name="Bekel T."/>
            <person name="Burger A."/>
            <person name="Engemann J."/>
            <person name="Fluegel M."/>
            <person name="Gaigalat L."/>
            <person name="Goesmann A."/>
            <person name="Graefen I."/>
            <person name="Kalinowski J."/>
            <person name="Kaup O."/>
            <person name="Kirchner O."/>
            <person name="Krause L."/>
            <person name="Linke B."/>
            <person name="McHardy A."/>
            <person name="Meyer F."/>
            <person name="Pohle S."/>
            <person name="Rueckert C."/>
            <person name="Schneiker S."/>
            <person name="Zellermann E.-M."/>
            <person name="Puehler A."/>
            <person name="Eichenlaub R."/>
            <person name="Kaiser O."/>
            <person name="Bartels D."/>
        </authorList>
    </citation>
    <scope>NUCLEOTIDE SEQUENCE [LARGE SCALE GENOMIC DNA]</scope>
    <source>
        <strain>NCPPB 382</strain>
    </source>
</reference>
<feature type="chain" id="PRO_0000321356" description="Adenine phosphoribosyltransferase">
    <location>
        <begin position="1"/>
        <end position="175"/>
    </location>
</feature>
<organism>
    <name type="scientific">Clavibacter michiganensis subsp. michiganensis (strain NCPPB 382)</name>
    <dbReference type="NCBI Taxonomy" id="443906"/>
    <lineage>
        <taxon>Bacteria</taxon>
        <taxon>Bacillati</taxon>
        <taxon>Actinomycetota</taxon>
        <taxon>Actinomycetes</taxon>
        <taxon>Micrococcales</taxon>
        <taxon>Microbacteriaceae</taxon>
        <taxon>Clavibacter</taxon>
    </lineage>
</organism>
<proteinExistence type="inferred from homology"/>
<sequence>MPETPASDLVRSLLLTVPDFPQPGILFRDLTPVLADGPALRAVVDDLVAACGPVDAVAGVEARGFLLAAAAAYASGVGTLAVRKAGKLPGEVLRETYALEYGEAAIELHPGQLAPGSRVLLLDDVLATGGTLEAAARLLERAGYEVAGIGVVLELADLGGRERLAGHDVRAILTL</sequence>
<protein>
    <recommendedName>
        <fullName evidence="1">Adenine phosphoribosyltransferase</fullName>
        <shortName evidence="1">APRT</shortName>
        <ecNumber evidence="1">2.4.2.7</ecNumber>
    </recommendedName>
</protein>
<keyword id="KW-0963">Cytoplasm</keyword>
<keyword id="KW-0328">Glycosyltransferase</keyword>
<keyword id="KW-0660">Purine salvage</keyword>
<keyword id="KW-0808">Transferase</keyword>
<gene>
    <name evidence="1" type="primary">apt</name>
    <name type="ordered locus">CMM_2055</name>
</gene>
<dbReference type="EC" id="2.4.2.7" evidence="1"/>
<dbReference type="EMBL" id="AM711867">
    <property type="protein sequence ID" value="CAN02118.1"/>
    <property type="molecule type" value="Genomic_DNA"/>
</dbReference>
<dbReference type="RefSeq" id="WP_012038742.1">
    <property type="nucleotide sequence ID" value="NC_009480.1"/>
</dbReference>
<dbReference type="SMR" id="A5CSP7"/>
<dbReference type="GeneID" id="92948049"/>
<dbReference type="KEGG" id="cmi:CMM_2055"/>
<dbReference type="eggNOG" id="COG0503">
    <property type="taxonomic scope" value="Bacteria"/>
</dbReference>
<dbReference type="HOGENOM" id="CLU_063339_3_3_11"/>
<dbReference type="UniPathway" id="UPA00588">
    <property type="reaction ID" value="UER00646"/>
</dbReference>
<dbReference type="Proteomes" id="UP000001564">
    <property type="component" value="Chromosome"/>
</dbReference>
<dbReference type="GO" id="GO:0005737">
    <property type="term" value="C:cytoplasm"/>
    <property type="evidence" value="ECO:0007669"/>
    <property type="project" value="UniProtKB-SubCell"/>
</dbReference>
<dbReference type="GO" id="GO:0002055">
    <property type="term" value="F:adenine binding"/>
    <property type="evidence" value="ECO:0007669"/>
    <property type="project" value="TreeGrafter"/>
</dbReference>
<dbReference type="GO" id="GO:0003999">
    <property type="term" value="F:adenine phosphoribosyltransferase activity"/>
    <property type="evidence" value="ECO:0007669"/>
    <property type="project" value="UniProtKB-UniRule"/>
</dbReference>
<dbReference type="GO" id="GO:0016208">
    <property type="term" value="F:AMP binding"/>
    <property type="evidence" value="ECO:0007669"/>
    <property type="project" value="TreeGrafter"/>
</dbReference>
<dbReference type="GO" id="GO:0006168">
    <property type="term" value="P:adenine salvage"/>
    <property type="evidence" value="ECO:0007669"/>
    <property type="project" value="InterPro"/>
</dbReference>
<dbReference type="GO" id="GO:0044209">
    <property type="term" value="P:AMP salvage"/>
    <property type="evidence" value="ECO:0007669"/>
    <property type="project" value="UniProtKB-UniRule"/>
</dbReference>
<dbReference type="GO" id="GO:0006166">
    <property type="term" value="P:purine ribonucleoside salvage"/>
    <property type="evidence" value="ECO:0007669"/>
    <property type="project" value="UniProtKB-KW"/>
</dbReference>
<dbReference type="CDD" id="cd06223">
    <property type="entry name" value="PRTases_typeI"/>
    <property type="match status" value="1"/>
</dbReference>
<dbReference type="FunFam" id="3.40.50.2020:FF:000021">
    <property type="entry name" value="Adenine phosphoribosyltransferase"/>
    <property type="match status" value="1"/>
</dbReference>
<dbReference type="Gene3D" id="3.40.50.2020">
    <property type="match status" value="1"/>
</dbReference>
<dbReference type="HAMAP" id="MF_00004">
    <property type="entry name" value="Aden_phosphoribosyltr"/>
    <property type="match status" value="1"/>
</dbReference>
<dbReference type="InterPro" id="IPR005764">
    <property type="entry name" value="Ade_phspho_trans"/>
</dbReference>
<dbReference type="InterPro" id="IPR000836">
    <property type="entry name" value="PRibTrfase_dom"/>
</dbReference>
<dbReference type="InterPro" id="IPR029057">
    <property type="entry name" value="PRTase-like"/>
</dbReference>
<dbReference type="InterPro" id="IPR050054">
    <property type="entry name" value="UPRTase/APRTase"/>
</dbReference>
<dbReference type="NCBIfam" id="NF002634">
    <property type="entry name" value="PRK02304.1-3"/>
    <property type="match status" value="1"/>
</dbReference>
<dbReference type="NCBIfam" id="NF002636">
    <property type="entry name" value="PRK02304.1-5"/>
    <property type="match status" value="1"/>
</dbReference>
<dbReference type="PANTHER" id="PTHR32315">
    <property type="entry name" value="ADENINE PHOSPHORIBOSYLTRANSFERASE"/>
    <property type="match status" value="1"/>
</dbReference>
<dbReference type="PANTHER" id="PTHR32315:SF3">
    <property type="entry name" value="ADENINE PHOSPHORIBOSYLTRANSFERASE"/>
    <property type="match status" value="1"/>
</dbReference>
<dbReference type="Pfam" id="PF00156">
    <property type="entry name" value="Pribosyltran"/>
    <property type="match status" value="1"/>
</dbReference>
<dbReference type="SUPFAM" id="SSF53271">
    <property type="entry name" value="PRTase-like"/>
    <property type="match status" value="1"/>
</dbReference>
<dbReference type="PROSITE" id="PS00103">
    <property type="entry name" value="PUR_PYR_PR_TRANSFER"/>
    <property type="match status" value="1"/>
</dbReference>
<comment type="function">
    <text evidence="1">Catalyzes a salvage reaction resulting in the formation of AMP, that is energically less costly than de novo synthesis.</text>
</comment>
<comment type="catalytic activity">
    <reaction evidence="1">
        <text>AMP + diphosphate = 5-phospho-alpha-D-ribose 1-diphosphate + adenine</text>
        <dbReference type="Rhea" id="RHEA:16609"/>
        <dbReference type="ChEBI" id="CHEBI:16708"/>
        <dbReference type="ChEBI" id="CHEBI:33019"/>
        <dbReference type="ChEBI" id="CHEBI:58017"/>
        <dbReference type="ChEBI" id="CHEBI:456215"/>
        <dbReference type="EC" id="2.4.2.7"/>
    </reaction>
</comment>
<comment type="pathway">
    <text evidence="1">Purine metabolism; AMP biosynthesis via salvage pathway; AMP from adenine: step 1/1.</text>
</comment>
<comment type="subunit">
    <text evidence="1">Homodimer.</text>
</comment>
<comment type="subcellular location">
    <subcellularLocation>
        <location evidence="1">Cytoplasm</location>
    </subcellularLocation>
</comment>
<comment type="similarity">
    <text evidence="1">Belongs to the purine/pyrimidine phosphoribosyltransferase family.</text>
</comment>
<name>APT_CLAM3</name>
<accession>A5CSP7</accession>
<evidence type="ECO:0000255" key="1">
    <source>
        <dbReference type="HAMAP-Rule" id="MF_00004"/>
    </source>
</evidence>